<feature type="chain" id="PRO_0000191563" description="Sperm protamine P1">
    <location>
        <begin position="1"/>
        <end position="63"/>
    </location>
</feature>
<feature type="region of interest" description="Disordered" evidence="2">
    <location>
        <begin position="1"/>
        <end position="63"/>
    </location>
</feature>
<name>HSP1_SMIDO</name>
<keyword id="KW-0158">Chromosome</keyword>
<keyword id="KW-0217">Developmental protein</keyword>
<keyword id="KW-0221">Differentiation</keyword>
<keyword id="KW-0226">DNA condensation</keyword>
<keyword id="KW-0238">DNA-binding</keyword>
<keyword id="KW-0544">Nucleosome core</keyword>
<keyword id="KW-0539">Nucleus</keyword>
<keyword id="KW-0744">Spermatogenesis</keyword>
<comment type="function">
    <text evidence="1">Protamines substitute for histones in the chromatin of sperm during the haploid phase of spermatogenesis. They compact sperm DNA into a highly condensed, stable and inactive complex (By similarity).</text>
</comment>
<comment type="subcellular location">
    <subcellularLocation>
        <location evidence="1">Nucleus</location>
    </subcellularLocation>
    <subcellularLocation>
        <location evidence="1">Chromosome</location>
    </subcellularLocation>
</comment>
<comment type="tissue specificity">
    <text>Testis.</text>
</comment>
<comment type="similarity">
    <text evidence="3">Belongs to the protamine P1 family.</text>
</comment>
<gene>
    <name type="primary">PRM1</name>
</gene>
<reference key="1">
    <citation type="journal article" date="1999" name="Mol. Phylogenet. Evol.">
        <title>Systematic relationships within the dasyurid marsupial tribe Sminthopsini -- a multigene approach.</title>
        <authorList>
            <person name="Blacket M.J."/>
            <person name="Krajewski C."/>
            <person name="Labrinidis A."/>
            <person name="Cambron B."/>
            <person name="Cooper S."/>
            <person name="Westerman M."/>
        </authorList>
    </citation>
    <scope>NUCLEOTIDE SEQUENCE [GENOMIC DNA]</scope>
</reference>
<organism>
    <name type="scientific">Sminthopsis douglasi</name>
    <name type="common">Julia creek dunnart</name>
    <dbReference type="NCBI Taxonomy" id="90758"/>
    <lineage>
        <taxon>Eukaryota</taxon>
        <taxon>Metazoa</taxon>
        <taxon>Chordata</taxon>
        <taxon>Craniata</taxon>
        <taxon>Vertebrata</taxon>
        <taxon>Euteleostomi</taxon>
        <taxon>Mammalia</taxon>
        <taxon>Metatheria</taxon>
        <taxon>Dasyuromorphia</taxon>
        <taxon>Dasyuridae</taxon>
        <taxon>Sminthopsis</taxon>
    </lineage>
</organism>
<proteinExistence type="evidence at transcript level"/>
<evidence type="ECO:0000250" key="1"/>
<evidence type="ECO:0000256" key="2">
    <source>
        <dbReference type="SAM" id="MobiDB-lite"/>
    </source>
</evidence>
<evidence type="ECO:0000305" key="3"/>
<accession>Q71UG6</accession>
<sequence length="63" mass="8697">MARYRRHSRSRSRSRYRRRRRRRSRHHNRRRTYRRSRRHSRRRRGRRRGYSRRRYSRRGRRRY</sequence>
<dbReference type="EMBL" id="AF089875">
    <property type="protein sequence ID" value="AAD55334.1"/>
    <property type="molecule type" value="Genomic_DNA"/>
</dbReference>
<dbReference type="GO" id="GO:0000786">
    <property type="term" value="C:nucleosome"/>
    <property type="evidence" value="ECO:0007669"/>
    <property type="project" value="UniProtKB-KW"/>
</dbReference>
<dbReference type="GO" id="GO:0005634">
    <property type="term" value="C:nucleus"/>
    <property type="evidence" value="ECO:0007669"/>
    <property type="project" value="UniProtKB-SubCell"/>
</dbReference>
<dbReference type="GO" id="GO:0003677">
    <property type="term" value="F:DNA binding"/>
    <property type="evidence" value="ECO:0007669"/>
    <property type="project" value="UniProtKB-KW"/>
</dbReference>
<dbReference type="GO" id="GO:0030261">
    <property type="term" value="P:chromosome condensation"/>
    <property type="evidence" value="ECO:0007669"/>
    <property type="project" value="UniProtKB-KW"/>
</dbReference>
<dbReference type="GO" id="GO:0035092">
    <property type="term" value="P:sperm DNA condensation"/>
    <property type="evidence" value="ECO:0007669"/>
    <property type="project" value="InterPro"/>
</dbReference>
<dbReference type="InterPro" id="IPR000221">
    <property type="entry name" value="Protamine_P1"/>
</dbReference>
<dbReference type="PROSITE" id="PS00048">
    <property type="entry name" value="PROTAMINE_P1"/>
    <property type="match status" value="1"/>
</dbReference>
<protein>
    <recommendedName>
        <fullName>Sperm protamine P1</fullName>
    </recommendedName>
</protein>